<proteinExistence type="evidence at protein level"/>
<gene>
    <name evidence="6" type="primary">HIP</name>
    <name type="ORF">CG32789</name>
</gene>
<sequence>MAFTMQTGDLKKLKYFIDFALENPTFLNMPQLQFVKDFVEKFGGTVPPGQFNGGSAGGKCPFGGVAGAKANEPANAPEDSEDEKSLSDPESDVELDMEGVIEADSDPAQPMGNYSKKATEEEVEQASELRAQAASAYGQQKFDEAIALYTKAIELSPGNALFHAKRGQAFLKLKKPNACIRDCDVALELNSDLAAGYKFRGRARRLLGDFELAAHDLRQACKLDFDEETDEWLKEVTPNAKKIEQHRLKQERRQAERKIKERQRDQRRARKEQEKHNASSGGSSGEFSGGNPGNGNMSDILGAMSDPEVSAAIQDILSNPGNITKYASNPKIYNLIKKIVPGGDVGAAFGQAGEKAGKPSEPKPKKDSADFVDDGLD</sequence>
<dbReference type="EMBL" id="FJ686088">
    <property type="protein sequence ID" value="ACQ66626.1"/>
    <property type="molecule type" value="Genomic_DNA"/>
</dbReference>
<dbReference type="EMBL" id="FJ686092">
    <property type="protein sequence ID" value="ACQ66627.1"/>
    <property type="molecule type" value="Genomic_DNA"/>
</dbReference>
<dbReference type="EMBL" id="FJ686093">
    <property type="protein sequence ID" value="ACQ66628.1"/>
    <property type="molecule type" value="Genomic_DNA"/>
</dbReference>
<dbReference type="EMBL" id="FJ686094">
    <property type="protein sequence ID" value="ACQ66629.1"/>
    <property type="molecule type" value="Genomic_DNA"/>
</dbReference>
<dbReference type="EMBL" id="FJ686095">
    <property type="protein sequence ID" value="ACQ66630.1"/>
    <property type="molecule type" value="Genomic_DNA"/>
</dbReference>
<dbReference type="EMBL" id="AE014298">
    <property type="protein sequence ID" value="AAN09108.2"/>
    <property type="molecule type" value="Genomic_DNA"/>
</dbReference>
<dbReference type="EMBL" id="BT099906">
    <property type="protein sequence ID" value="ACX32977.1"/>
    <property type="status" value="ALT_INIT"/>
    <property type="molecule type" value="mRNA"/>
</dbReference>
<dbReference type="RefSeq" id="NP_001014719.2">
    <property type="nucleotide sequence ID" value="NM_001014719.2"/>
</dbReference>
<dbReference type="RefSeq" id="NP_570074.3">
    <property type="nucleotide sequence ID" value="NM_130718.5"/>
</dbReference>
<dbReference type="RefSeq" id="NP_726885.1">
    <property type="nucleotide sequence ID" value="NM_166988.4"/>
</dbReference>
<dbReference type="RefSeq" id="NP_726886.1">
    <property type="nucleotide sequence ID" value="NM_166989.5"/>
</dbReference>
<dbReference type="SMR" id="C4NYP8"/>
<dbReference type="BioGRID" id="57855">
    <property type="interactions" value="51"/>
</dbReference>
<dbReference type="BioGRID" id="76808">
    <property type="interactions" value="2"/>
</dbReference>
<dbReference type="FunCoup" id="C4NYP8">
    <property type="interactions" value="1697"/>
</dbReference>
<dbReference type="IntAct" id="C4NYP8">
    <property type="interactions" value="37"/>
</dbReference>
<dbReference type="STRING" id="7227.FBpp0070573"/>
<dbReference type="iPTMnet" id="C4NYP8"/>
<dbReference type="PaxDb" id="7227-FBpp0070573"/>
<dbReference type="DNASU" id="31335"/>
<dbReference type="DNASU" id="318211"/>
<dbReference type="EnsemblMetazoa" id="FBtr0070597">
    <property type="protein sequence ID" value="FBpp0070572"/>
    <property type="gene ID" value="FBgn0029676"/>
</dbReference>
<dbReference type="EnsemblMetazoa" id="FBtr0070598">
    <property type="protein sequence ID" value="FBpp0070573"/>
    <property type="gene ID" value="FBgn0029676"/>
</dbReference>
<dbReference type="EnsemblMetazoa" id="FBtr0070600">
    <property type="protein sequence ID" value="FBpp0070575"/>
    <property type="gene ID" value="FBgn0260484"/>
</dbReference>
<dbReference type="EnsemblMetazoa" id="FBtr0333764">
    <property type="protein sequence ID" value="FBpp0305905"/>
    <property type="gene ID" value="FBgn0029676"/>
</dbReference>
<dbReference type="GeneID" id="31335"/>
<dbReference type="GeneID" id="318211"/>
<dbReference type="KEGG" id="dme:Dmel_CG2947"/>
<dbReference type="KEGG" id="dme:Dmel_CG32789"/>
<dbReference type="AGR" id="FB:FBgn0260484"/>
<dbReference type="CTD" id="31335"/>
<dbReference type="CTD" id="318211"/>
<dbReference type="FlyBase" id="FBgn0260484">
    <property type="gene designation" value="HIP"/>
</dbReference>
<dbReference type="VEuPathDB" id="VectorBase:FBgn0029676"/>
<dbReference type="VEuPathDB" id="VectorBase:FBgn0260484"/>
<dbReference type="eggNOG" id="KOG1308">
    <property type="taxonomic scope" value="Eukaryota"/>
</dbReference>
<dbReference type="HOGENOM" id="CLU_026202_0_1_1"/>
<dbReference type="InParanoid" id="C4NYP8"/>
<dbReference type="OMA" id="YEKRRYK"/>
<dbReference type="OrthoDB" id="533763at2759"/>
<dbReference type="PhylomeDB" id="C4NYP8"/>
<dbReference type="PRO" id="PR:C4NYP8"/>
<dbReference type="Proteomes" id="UP000000803">
    <property type="component" value="Chromosome X"/>
</dbReference>
<dbReference type="Bgee" id="FBgn0029676">
    <property type="expression patterns" value="Expressed in T neuron T5d (Drosophila) in embryonic/larval optic lobe (Drosophila) and 185 other cell types or tissues"/>
</dbReference>
<dbReference type="ExpressionAtlas" id="C4NYP8">
    <property type="expression patterns" value="baseline and differential"/>
</dbReference>
<dbReference type="GO" id="GO:0005737">
    <property type="term" value="C:cytoplasm"/>
    <property type="evidence" value="ECO:0007005"/>
    <property type="project" value="FlyBase"/>
</dbReference>
<dbReference type="GO" id="GO:0005829">
    <property type="term" value="C:cytosol"/>
    <property type="evidence" value="ECO:0000250"/>
    <property type="project" value="FlyBase"/>
</dbReference>
<dbReference type="GO" id="GO:0032991">
    <property type="term" value="C:protein-containing complex"/>
    <property type="evidence" value="ECO:0000250"/>
    <property type="project" value="UniProtKB"/>
</dbReference>
<dbReference type="GO" id="GO:0031072">
    <property type="term" value="F:heat shock protein binding"/>
    <property type="evidence" value="ECO:0000250"/>
    <property type="project" value="FlyBase"/>
</dbReference>
<dbReference type="GO" id="GO:0030544">
    <property type="term" value="F:Hsp70 protein binding"/>
    <property type="evidence" value="ECO:0000250"/>
    <property type="project" value="UniProtKB"/>
</dbReference>
<dbReference type="GO" id="GO:0046983">
    <property type="term" value="F:protein dimerization activity"/>
    <property type="evidence" value="ECO:0007669"/>
    <property type="project" value="InterPro"/>
</dbReference>
<dbReference type="GO" id="GO:0051087">
    <property type="term" value="F:protein-folding chaperone binding"/>
    <property type="evidence" value="ECO:0000250"/>
    <property type="project" value="FlyBase"/>
</dbReference>
<dbReference type="GO" id="GO:0051085">
    <property type="term" value="P:chaperone cofactor-dependent protein refolding"/>
    <property type="evidence" value="ECO:0000250"/>
    <property type="project" value="UniProtKB"/>
</dbReference>
<dbReference type="CDD" id="cd14438">
    <property type="entry name" value="Hip_N"/>
    <property type="match status" value="1"/>
</dbReference>
<dbReference type="FunFam" id="1.25.40.10:FF:000112">
    <property type="entry name" value="FAM10 family protein"/>
    <property type="match status" value="1"/>
</dbReference>
<dbReference type="FunFam" id="6.10.250.3420:FF:000001">
    <property type="entry name" value="Hsc70-interacting protein-like protein"/>
    <property type="match status" value="1"/>
</dbReference>
<dbReference type="Gene3D" id="1.10.260.100">
    <property type="match status" value="1"/>
</dbReference>
<dbReference type="Gene3D" id="6.10.250.3420">
    <property type="match status" value="1"/>
</dbReference>
<dbReference type="Gene3D" id="1.25.40.10">
    <property type="entry name" value="Tetratricopeptide repeat domain"/>
    <property type="match status" value="1"/>
</dbReference>
<dbReference type="InterPro" id="IPR034649">
    <property type="entry name" value="Hip_N"/>
</dbReference>
<dbReference type="InterPro" id="IPR006636">
    <property type="entry name" value="STI1_HS-bd"/>
</dbReference>
<dbReference type="InterPro" id="IPR011990">
    <property type="entry name" value="TPR-like_helical_dom_sf"/>
</dbReference>
<dbReference type="InterPro" id="IPR019734">
    <property type="entry name" value="TPR_rpt"/>
</dbReference>
<dbReference type="PANTHER" id="PTHR45883">
    <property type="entry name" value="HSC70-INTERACTING PROTEIN"/>
    <property type="match status" value="1"/>
</dbReference>
<dbReference type="PANTHER" id="PTHR45883:SF2">
    <property type="entry name" value="HSC70-INTERACTING PROTEIN"/>
    <property type="match status" value="1"/>
</dbReference>
<dbReference type="Pfam" id="PF18253">
    <property type="entry name" value="HipN"/>
    <property type="match status" value="1"/>
</dbReference>
<dbReference type="Pfam" id="PF13414">
    <property type="entry name" value="TPR_11"/>
    <property type="match status" value="1"/>
</dbReference>
<dbReference type="SMART" id="SM00727">
    <property type="entry name" value="STI1"/>
    <property type="match status" value="1"/>
</dbReference>
<dbReference type="SMART" id="SM00028">
    <property type="entry name" value="TPR"/>
    <property type="match status" value="3"/>
</dbReference>
<dbReference type="SUPFAM" id="SSF48452">
    <property type="entry name" value="TPR-like"/>
    <property type="match status" value="1"/>
</dbReference>
<dbReference type="PROSITE" id="PS50005">
    <property type="entry name" value="TPR"/>
    <property type="match status" value="2"/>
</dbReference>
<dbReference type="PROSITE" id="PS50293">
    <property type="entry name" value="TPR_REGION"/>
    <property type="match status" value="1"/>
</dbReference>
<comment type="function">
    <text evidence="1">One HIP oligomer binds the ATPase domains of at least two Hsc70 molecules dependent on activation of the Hsc70 ATPase by Hsp40. Stabilizes the ADP state of Hsc70 that has a high affinity for substrate protein. Through its own chaperone activity, it may contribute to the interaction of Hsc70 with various target proteins (By similarity).</text>
</comment>
<comment type="subunit">
    <text evidence="1">Homotetramer. Interacts with Hsc70 as well as DNAJ homologs and Hsp90 (By similarity).</text>
</comment>
<comment type="subcellular location">
    <subcellularLocation>
        <location evidence="1">Cytoplasm</location>
    </subcellularLocation>
</comment>
<comment type="similarity">
    <text evidence="2">Belongs to the FAM10 family.</text>
</comment>
<comment type="sequence caution" evidence="7">
    <conflict type="erroneous initiation">
        <sequence resource="EMBL-CDS" id="ACX32977"/>
    </conflict>
    <text>Extended N-terminus.</text>
</comment>
<accession>C4NYP8</accession>
<accession>C0L9I4</accession>
<accession>C0L9I8</accession>
<accession>C9QP24</accession>
<accession>Q8IRT4</accession>
<organism>
    <name type="scientific">Drosophila melanogaster</name>
    <name type="common">Fruit fly</name>
    <dbReference type="NCBI Taxonomy" id="7227"/>
    <lineage>
        <taxon>Eukaryota</taxon>
        <taxon>Metazoa</taxon>
        <taxon>Ecdysozoa</taxon>
        <taxon>Arthropoda</taxon>
        <taxon>Hexapoda</taxon>
        <taxon>Insecta</taxon>
        <taxon>Pterygota</taxon>
        <taxon>Neoptera</taxon>
        <taxon>Endopterygota</taxon>
        <taxon>Diptera</taxon>
        <taxon>Brachycera</taxon>
        <taxon>Muscomorpha</taxon>
        <taxon>Ephydroidea</taxon>
        <taxon>Drosophilidae</taxon>
        <taxon>Drosophila</taxon>
        <taxon>Sophophora</taxon>
    </lineage>
</organism>
<evidence type="ECO:0000250" key="1">
    <source>
        <dbReference type="UniProtKB" id="P50503"/>
    </source>
</evidence>
<evidence type="ECO:0000255" key="2"/>
<evidence type="ECO:0000256" key="3">
    <source>
        <dbReference type="SAM" id="MobiDB-lite"/>
    </source>
</evidence>
<evidence type="ECO:0000269" key="4">
    <source>
    </source>
</evidence>
<evidence type="ECO:0000269" key="5">
    <source>
    </source>
</evidence>
<evidence type="ECO:0000303" key="6">
    <source>
    </source>
</evidence>
<evidence type="ECO:0000305" key="7"/>
<evidence type="ECO:0000312" key="8">
    <source>
        <dbReference type="EMBL" id="AAN09108.2"/>
    </source>
</evidence>
<evidence type="ECO:0000312" key="9">
    <source>
        <dbReference type="EMBL" id="ACQ66626.1"/>
    </source>
</evidence>
<evidence type="ECO:0000312" key="10">
    <source>
        <dbReference type="EMBL" id="ACQ66627.1"/>
    </source>
</evidence>
<evidence type="ECO:0000312" key="11">
    <source>
        <dbReference type="EMBL" id="ACQ66628.1"/>
    </source>
</evidence>
<evidence type="ECO:0000312" key="12">
    <source>
        <dbReference type="EMBL" id="ACQ66629.1"/>
    </source>
</evidence>
<evidence type="ECO:0000312" key="13">
    <source>
        <dbReference type="EMBL" id="ACQ66630.1"/>
    </source>
</evidence>
<evidence type="ECO:0000312" key="14">
    <source>
        <dbReference type="EMBL" id="ACX32977.1"/>
    </source>
</evidence>
<keyword id="KW-0175">Coiled coil</keyword>
<keyword id="KW-0963">Cytoplasm</keyword>
<keyword id="KW-0597">Phosphoprotein</keyword>
<keyword id="KW-1185">Reference proteome</keyword>
<keyword id="KW-0677">Repeat</keyword>
<keyword id="KW-0802">TPR repeat</keyword>
<name>F10A1_DROME</name>
<reference evidence="7 9" key="1">
    <citation type="journal article" date="2009" name="J. Mol. Evol.">
        <title>Duplicate gene evolution toward multiple fates at the Drosophila melanogaster HIP/HIP-Replacement locus.</title>
        <authorList>
            <person name="Hogan C.C."/>
            <person name="Bettencourt B.R."/>
        </authorList>
    </citation>
    <scope>NUCLEOTIDE SEQUENCE [GENOMIC DNA]</scope>
    <scope>VARIANTS ASN-105; ASP-227 AND ALA-290</scope>
    <source>
        <strain evidence="11">XCPA112</strain>
        <strain evidence="13">XCPA126</strain>
        <strain evidence="9">XCPA25</strain>
        <strain evidence="12">XCPA77</strain>
        <strain evidence="10">XCPA93</strain>
    </source>
</reference>
<reference evidence="8" key="2">
    <citation type="journal article" date="2000" name="Science">
        <title>The genome sequence of Drosophila melanogaster.</title>
        <authorList>
            <person name="Adams M.D."/>
            <person name="Celniker S.E."/>
            <person name="Holt R.A."/>
            <person name="Evans C.A."/>
            <person name="Gocayne J.D."/>
            <person name="Amanatides P.G."/>
            <person name="Scherer S.E."/>
            <person name="Li P.W."/>
            <person name="Hoskins R.A."/>
            <person name="Galle R.F."/>
            <person name="George R.A."/>
            <person name="Lewis S.E."/>
            <person name="Richards S."/>
            <person name="Ashburner M."/>
            <person name="Henderson S.N."/>
            <person name="Sutton G.G."/>
            <person name="Wortman J.R."/>
            <person name="Yandell M.D."/>
            <person name="Zhang Q."/>
            <person name="Chen L.X."/>
            <person name="Brandon R.C."/>
            <person name="Rogers Y.-H.C."/>
            <person name="Blazej R.G."/>
            <person name="Champe M."/>
            <person name="Pfeiffer B.D."/>
            <person name="Wan K.H."/>
            <person name="Doyle C."/>
            <person name="Baxter E.G."/>
            <person name="Helt G."/>
            <person name="Nelson C.R."/>
            <person name="Miklos G.L.G."/>
            <person name="Abril J.F."/>
            <person name="Agbayani A."/>
            <person name="An H.-J."/>
            <person name="Andrews-Pfannkoch C."/>
            <person name="Baldwin D."/>
            <person name="Ballew R.M."/>
            <person name="Basu A."/>
            <person name="Baxendale J."/>
            <person name="Bayraktaroglu L."/>
            <person name="Beasley E.M."/>
            <person name="Beeson K.Y."/>
            <person name="Benos P.V."/>
            <person name="Berman B.P."/>
            <person name="Bhandari D."/>
            <person name="Bolshakov S."/>
            <person name="Borkova D."/>
            <person name="Botchan M.R."/>
            <person name="Bouck J."/>
            <person name="Brokstein P."/>
            <person name="Brottier P."/>
            <person name="Burtis K.C."/>
            <person name="Busam D.A."/>
            <person name="Butler H."/>
            <person name="Cadieu E."/>
            <person name="Center A."/>
            <person name="Chandra I."/>
            <person name="Cherry J.M."/>
            <person name="Cawley S."/>
            <person name="Dahlke C."/>
            <person name="Davenport L.B."/>
            <person name="Davies P."/>
            <person name="de Pablos B."/>
            <person name="Delcher A."/>
            <person name="Deng Z."/>
            <person name="Mays A.D."/>
            <person name="Dew I."/>
            <person name="Dietz S.M."/>
            <person name="Dodson K."/>
            <person name="Doup L.E."/>
            <person name="Downes M."/>
            <person name="Dugan-Rocha S."/>
            <person name="Dunkov B.C."/>
            <person name="Dunn P."/>
            <person name="Durbin K.J."/>
            <person name="Evangelista C.C."/>
            <person name="Ferraz C."/>
            <person name="Ferriera S."/>
            <person name="Fleischmann W."/>
            <person name="Fosler C."/>
            <person name="Gabrielian A.E."/>
            <person name="Garg N.S."/>
            <person name="Gelbart W.M."/>
            <person name="Glasser K."/>
            <person name="Glodek A."/>
            <person name="Gong F."/>
            <person name="Gorrell J.H."/>
            <person name="Gu Z."/>
            <person name="Guan P."/>
            <person name="Harris M."/>
            <person name="Harris N.L."/>
            <person name="Harvey D.A."/>
            <person name="Heiman T.J."/>
            <person name="Hernandez J.R."/>
            <person name="Houck J."/>
            <person name="Hostin D."/>
            <person name="Houston K.A."/>
            <person name="Howland T.J."/>
            <person name="Wei M.-H."/>
            <person name="Ibegwam C."/>
            <person name="Jalali M."/>
            <person name="Kalush F."/>
            <person name="Karpen G.H."/>
            <person name="Ke Z."/>
            <person name="Kennison J.A."/>
            <person name="Ketchum K.A."/>
            <person name="Kimmel B.E."/>
            <person name="Kodira C.D."/>
            <person name="Kraft C.L."/>
            <person name="Kravitz S."/>
            <person name="Kulp D."/>
            <person name="Lai Z."/>
            <person name="Lasko P."/>
            <person name="Lei Y."/>
            <person name="Levitsky A.A."/>
            <person name="Li J.H."/>
            <person name="Li Z."/>
            <person name="Liang Y."/>
            <person name="Lin X."/>
            <person name="Liu X."/>
            <person name="Mattei B."/>
            <person name="McIntosh T.C."/>
            <person name="McLeod M.P."/>
            <person name="McPherson D."/>
            <person name="Merkulov G."/>
            <person name="Milshina N.V."/>
            <person name="Mobarry C."/>
            <person name="Morris J."/>
            <person name="Moshrefi A."/>
            <person name="Mount S.M."/>
            <person name="Moy M."/>
            <person name="Murphy B."/>
            <person name="Murphy L."/>
            <person name="Muzny D.M."/>
            <person name="Nelson D.L."/>
            <person name="Nelson D.R."/>
            <person name="Nelson K.A."/>
            <person name="Nixon K."/>
            <person name="Nusskern D.R."/>
            <person name="Pacleb J.M."/>
            <person name="Palazzolo M."/>
            <person name="Pittman G.S."/>
            <person name="Pan S."/>
            <person name="Pollard J."/>
            <person name="Puri V."/>
            <person name="Reese M.G."/>
            <person name="Reinert K."/>
            <person name="Remington K."/>
            <person name="Saunders R.D.C."/>
            <person name="Scheeler F."/>
            <person name="Shen H."/>
            <person name="Shue B.C."/>
            <person name="Siden-Kiamos I."/>
            <person name="Simpson M."/>
            <person name="Skupski M.P."/>
            <person name="Smith T.J."/>
            <person name="Spier E."/>
            <person name="Spradling A.C."/>
            <person name="Stapleton M."/>
            <person name="Strong R."/>
            <person name="Sun E."/>
            <person name="Svirskas R."/>
            <person name="Tector C."/>
            <person name="Turner R."/>
            <person name="Venter E."/>
            <person name="Wang A.H."/>
            <person name="Wang X."/>
            <person name="Wang Z.-Y."/>
            <person name="Wassarman D.A."/>
            <person name="Weinstock G.M."/>
            <person name="Weissenbach J."/>
            <person name="Williams S.M."/>
            <person name="Woodage T."/>
            <person name="Worley K.C."/>
            <person name="Wu D."/>
            <person name="Yang S."/>
            <person name="Yao Q.A."/>
            <person name="Ye J."/>
            <person name="Yeh R.-F."/>
            <person name="Zaveri J.S."/>
            <person name="Zhan M."/>
            <person name="Zhang G."/>
            <person name="Zhao Q."/>
            <person name="Zheng L."/>
            <person name="Zheng X.H."/>
            <person name="Zhong F.N."/>
            <person name="Zhong W."/>
            <person name="Zhou X."/>
            <person name="Zhu S.C."/>
            <person name="Zhu X."/>
            <person name="Smith H.O."/>
            <person name="Gibbs R.A."/>
            <person name="Myers E.W."/>
            <person name="Rubin G.M."/>
            <person name="Venter J.C."/>
        </authorList>
    </citation>
    <scope>NUCLEOTIDE SEQUENCE [LARGE SCALE GENOMIC DNA]</scope>
    <source>
        <strain>Berkeley</strain>
    </source>
</reference>
<reference evidence="7 8" key="3">
    <citation type="journal article" date="2002" name="Genome Biol.">
        <title>Annotation of the Drosophila melanogaster euchromatic genome: a systematic review.</title>
        <authorList>
            <person name="Misra S."/>
            <person name="Crosby M.A."/>
            <person name="Mungall C.J."/>
            <person name="Matthews B.B."/>
            <person name="Campbell K.S."/>
            <person name="Hradecky P."/>
            <person name="Huang Y."/>
            <person name="Kaminker J.S."/>
            <person name="Millburn G.H."/>
            <person name="Prochnik S.E."/>
            <person name="Smith C.D."/>
            <person name="Tupy J.L."/>
            <person name="Whitfield E.J."/>
            <person name="Bayraktaroglu L."/>
            <person name="Berman B.P."/>
            <person name="Bettencourt B.R."/>
            <person name="Celniker S.E."/>
            <person name="de Grey A.D.N.J."/>
            <person name="Drysdale R.A."/>
            <person name="Harris N.L."/>
            <person name="Richter J."/>
            <person name="Russo S."/>
            <person name="Schroeder A.J."/>
            <person name="Shu S.Q."/>
            <person name="Stapleton M."/>
            <person name="Yamada C."/>
            <person name="Ashburner M."/>
            <person name="Gelbart W.M."/>
            <person name="Rubin G.M."/>
            <person name="Lewis S.E."/>
        </authorList>
    </citation>
    <scope>GENOME REANNOTATION</scope>
    <source>
        <strain>Berkeley</strain>
    </source>
</reference>
<reference evidence="14" key="4">
    <citation type="submission" date="2009-10" db="EMBL/GenBank/DDBJ databases">
        <authorList>
            <person name="Carlson J.W."/>
            <person name="Booth B."/>
            <person name="Frise E."/>
            <person name="Park S."/>
            <person name="Wan K.H."/>
            <person name="Yu C."/>
            <person name="Celniker S.E."/>
        </authorList>
    </citation>
    <scope>NUCLEOTIDE SEQUENCE [LARGE SCALE MRNA]</scope>
    <source>
        <strain evidence="14">Berkeley</strain>
        <tissue>Embryo</tissue>
    </source>
</reference>
<reference evidence="7" key="5">
    <citation type="journal article" date="2007" name="Mol. Biosyst.">
        <title>An integrated chemical, mass spectrometric and computational strategy for (quantitative) phosphoproteomics: application to Drosophila melanogaster Kc167 cells.</title>
        <authorList>
            <person name="Bodenmiller B."/>
            <person name="Mueller L.N."/>
            <person name="Pedrioli P.G.A."/>
            <person name="Pflieger D."/>
            <person name="Juenger M.A."/>
            <person name="Eng J.K."/>
            <person name="Aebersold R."/>
            <person name="Tao W.A."/>
        </authorList>
    </citation>
    <scope>PHOSPHORYLATION [LARGE SCALE ANALYSIS] AT SER-80</scope>
    <scope>IDENTIFICATION BY MASS SPECTROMETRY</scope>
</reference>
<protein>
    <recommendedName>
        <fullName evidence="6">Hsc70-interacting protein 1</fullName>
    </recommendedName>
</protein>
<feature type="chain" id="PRO_0000393584" description="Hsc70-interacting protein 1">
    <location>
        <begin position="1"/>
        <end position="377"/>
    </location>
</feature>
<feature type="repeat" description="TPR 1" evidence="2">
    <location>
        <begin position="126"/>
        <end position="159"/>
    </location>
</feature>
<feature type="repeat" description="TPR 2" evidence="2">
    <location>
        <begin position="161"/>
        <end position="193"/>
    </location>
</feature>
<feature type="repeat" description="TPR 3" evidence="2">
    <location>
        <begin position="195"/>
        <end position="227"/>
    </location>
</feature>
<feature type="domain" description="STI1" evidence="2">
    <location>
        <begin position="294"/>
        <end position="336"/>
    </location>
</feature>
<feature type="region of interest" description="Disordered" evidence="3">
    <location>
        <begin position="68"/>
        <end position="123"/>
    </location>
</feature>
<feature type="region of interest" description="Disordered" evidence="3">
    <location>
        <begin position="243"/>
        <end position="302"/>
    </location>
</feature>
<feature type="region of interest" description="Disordered" evidence="3">
    <location>
        <begin position="344"/>
        <end position="377"/>
    </location>
</feature>
<feature type="coiled-coil region" evidence="2">
    <location>
        <begin position="239"/>
        <end position="276"/>
    </location>
</feature>
<feature type="compositionally biased region" description="Acidic residues" evidence="3">
    <location>
        <begin position="89"/>
        <end position="105"/>
    </location>
</feature>
<feature type="compositionally biased region" description="Basic and acidic residues" evidence="3">
    <location>
        <begin position="243"/>
        <end position="277"/>
    </location>
</feature>
<feature type="compositionally biased region" description="Gly residues" evidence="3">
    <location>
        <begin position="282"/>
        <end position="293"/>
    </location>
</feature>
<feature type="compositionally biased region" description="Basic and acidic residues" evidence="3">
    <location>
        <begin position="355"/>
        <end position="369"/>
    </location>
</feature>
<feature type="modified residue" description="Phosphoserine" evidence="4">
    <location>
        <position position="80"/>
    </location>
</feature>
<feature type="sequence variant" description="In strain: XCPA112." evidence="5">
    <original>S</original>
    <variation>N</variation>
    <location>
        <position position="105"/>
    </location>
</feature>
<feature type="sequence variant" description="In strain: XCPA25." evidence="5">
    <original>E</original>
    <variation>D</variation>
    <location>
        <position position="227"/>
    </location>
</feature>
<feature type="sequence variant" description="In strain: XCPA77, XCPA93 and XCPA126." evidence="5">
    <original>G</original>
    <variation>A</variation>
    <location>
        <position position="290"/>
    </location>
</feature>